<evidence type="ECO:0000255" key="1"/>
<evidence type="ECO:0000305" key="2"/>
<protein>
    <recommendedName>
        <fullName>UPF0421 protein SAB1821</fullName>
    </recommendedName>
</protein>
<reference key="1">
    <citation type="journal article" date="2007" name="PLoS ONE">
        <title>Molecular correlates of host specialization in Staphylococcus aureus.</title>
        <authorList>
            <person name="Herron-Olson L."/>
            <person name="Fitzgerald J.R."/>
            <person name="Musser J.M."/>
            <person name="Kapur V."/>
        </authorList>
    </citation>
    <scope>NUCLEOTIDE SEQUENCE [LARGE SCALE GENOMIC DNA]</scope>
    <source>
        <strain>bovine RF122 / ET3-1</strain>
    </source>
</reference>
<name>Y1821_STAAB</name>
<sequence length="328" mass="37436">MNDQWYKHLIGARTIKTGIAIFLTAVFCMALDLTPIYAILTAVVTIEPTAKASLIKGYRRLPATVIGAGFAVLFTYLFGDQSPFTYALSATFTILFCTKLKLQVGTNVAVLTSLAMIPGIHDAYIFNFLSRTLTAIIGLVTSGLINFMVFPPKYYGQVEEKLSKTDALMYKLFYNRCQELILSRLQSDKSEKAYKNIFNLNNQVETLISYQRDELSYHKKKECDWKLLNQLTKRAYTNRLFITHLSNIIYLPKNTRVNFSGDEKMALLKISSSIKDIFYDGSFKREDDSVETLRSTIKALEISGENQIKSHILYEVLMIYRLLDSRYA</sequence>
<gene>
    <name type="ordered locus">SAB1821</name>
</gene>
<accession>Q2YU38</accession>
<feature type="chain" id="PRO_0000283015" description="UPF0421 protein SAB1821">
    <location>
        <begin position="1"/>
        <end position="328"/>
    </location>
</feature>
<feature type="transmembrane region" description="Helical" evidence="1">
    <location>
        <begin position="19"/>
        <end position="39"/>
    </location>
</feature>
<feature type="transmembrane region" description="Helical" evidence="1">
    <location>
        <begin position="61"/>
        <end position="81"/>
    </location>
</feature>
<feature type="transmembrane region" description="Helical" evidence="1">
    <location>
        <begin position="108"/>
        <end position="128"/>
    </location>
</feature>
<feature type="transmembrane region" description="Helical" evidence="1">
    <location>
        <begin position="132"/>
        <end position="152"/>
    </location>
</feature>
<proteinExistence type="inferred from homology"/>
<dbReference type="EMBL" id="AJ938182">
    <property type="protein sequence ID" value="CAI81510.1"/>
    <property type="molecule type" value="Genomic_DNA"/>
</dbReference>
<dbReference type="RefSeq" id="WP_000999713.1">
    <property type="nucleotide sequence ID" value="NC_007622.1"/>
</dbReference>
<dbReference type="SMR" id="Q2YU38"/>
<dbReference type="KEGG" id="sab:SAB1821"/>
<dbReference type="HOGENOM" id="CLU_067028_0_0_9"/>
<dbReference type="GO" id="GO:0005886">
    <property type="term" value="C:plasma membrane"/>
    <property type="evidence" value="ECO:0007669"/>
    <property type="project" value="UniProtKB-SubCell"/>
</dbReference>
<dbReference type="InterPro" id="IPR010343">
    <property type="entry name" value="ArAE_1"/>
</dbReference>
<dbReference type="PANTHER" id="PTHR31086">
    <property type="entry name" value="ALUMINUM-ACTIVATED MALATE TRANSPORTER 10"/>
    <property type="match status" value="1"/>
</dbReference>
<dbReference type="Pfam" id="PF06081">
    <property type="entry name" value="ArAE_1"/>
    <property type="match status" value="1"/>
</dbReference>
<comment type="subcellular location">
    <subcellularLocation>
        <location evidence="2">Cell membrane</location>
        <topology evidence="2">Multi-pass membrane protein</topology>
    </subcellularLocation>
</comment>
<comment type="similarity">
    <text evidence="2">Belongs to the UPF0421 family.</text>
</comment>
<organism>
    <name type="scientific">Staphylococcus aureus (strain bovine RF122 / ET3-1)</name>
    <dbReference type="NCBI Taxonomy" id="273036"/>
    <lineage>
        <taxon>Bacteria</taxon>
        <taxon>Bacillati</taxon>
        <taxon>Bacillota</taxon>
        <taxon>Bacilli</taxon>
        <taxon>Bacillales</taxon>
        <taxon>Staphylococcaceae</taxon>
        <taxon>Staphylococcus</taxon>
    </lineage>
</organism>
<keyword id="KW-1003">Cell membrane</keyword>
<keyword id="KW-0472">Membrane</keyword>
<keyword id="KW-0812">Transmembrane</keyword>
<keyword id="KW-1133">Transmembrane helix</keyword>